<sequence length="11" mass="1103">GSSGLISMPRV</sequence>
<evidence type="ECO:0000255" key="1"/>
<evidence type="ECO:0000269" key="2">
    <source>
    </source>
</evidence>
<evidence type="ECO:0000303" key="3">
    <source>
    </source>
</evidence>
<evidence type="ECO:0000305" key="4"/>
<keyword id="KW-0027">Amidation</keyword>
<keyword id="KW-0903">Direct protein sequencing</keyword>
<keyword id="KW-0527">Neuropeptide</keyword>
<keyword id="KW-0964">Secreted</keyword>
<organism>
    <name type="scientific">Panesthia sp. (strain BF-2008)</name>
    <name type="common">Cockroach</name>
    <dbReference type="NCBI Taxonomy" id="521518"/>
    <lineage>
        <taxon>Eukaryota</taxon>
        <taxon>Metazoa</taxon>
        <taxon>Ecdysozoa</taxon>
        <taxon>Arthropoda</taxon>
        <taxon>Hexapoda</taxon>
        <taxon>Insecta</taxon>
        <taxon>Pterygota</taxon>
        <taxon>Neoptera</taxon>
        <taxon>Polyneoptera</taxon>
        <taxon>Dictyoptera</taxon>
        <taxon>Blattodea</taxon>
        <taxon>Blaberoidea</taxon>
        <taxon>Blaberidae</taxon>
        <taxon>Panesthiinae</taxon>
        <taxon>Panesthia</taxon>
    </lineage>
</organism>
<feature type="peptide" id="PRO_0000378800" description="Periviscerokinin-2" evidence="2">
    <location>
        <begin position="1"/>
        <end position="11"/>
    </location>
</feature>
<feature type="modified residue" description="Valine amide" evidence="2">
    <location>
        <position position="11"/>
    </location>
</feature>
<reference evidence="4" key="1">
    <citation type="journal article" date="2009" name="BMC Evol. Biol.">
        <title>A proteomic approach for studying insect phylogeny: CAPA peptides of ancient insect taxa (Dictyoptera, Blattoptera) as a test case.</title>
        <authorList>
            <person name="Roth S."/>
            <person name="Fromm B."/>
            <person name="Gaede G."/>
            <person name="Predel R."/>
        </authorList>
    </citation>
    <scope>PROTEIN SEQUENCE</scope>
    <scope>AMIDATION AT VAL-11</scope>
    <source>
        <tissue evidence="2">Abdominal perisympathetic organs</tissue>
    </source>
</reference>
<comment type="function">
    <text evidence="4">Mediates visceral muscle contractile activity (myotropic activity).</text>
</comment>
<comment type="subcellular location">
    <subcellularLocation>
        <location evidence="4">Secreted</location>
    </subcellularLocation>
</comment>
<comment type="similarity">
    <text evidence="1">Belongs to the periviscerokinin family.</text>
</comment>
<protein>
    <recommendedName>
        <fullName evidence="3">Periviscerokinin-2</fullName>
        <shortName evidence="3">PanS2-PVK-2</shortName>
    </recommendedName>
</protein>
<name>PVK2_PANSB</name>
<dbReference type="GO" id="GO:0005576">
    <property type="term" value="C:extracellular region"/>
    <property type="evidence" value="ECO:0007669"/>
    <property type="project" value="UniProtKB-SubCell"/>
</dbReference>
<dbReference type="GO" id="GO:0007218">
    <property type="term" value="P:neuropeptide signaling pathway"/>
    <property type="evidence" value="ECO:0007669"/>
    <property type="project" value="UniProtKB-KW"/>
</dbReference>
<dbReference type="InterPro" id="IPR013231">
    <property type="entry name" value="Periviscerokinin"/>
</dbReference>
<dbReference type="Pfam" id="PF08259">
    <property type="entry name" value="Periviscerokin"/>
    <property type="match status" value="1"/>
</dbReference>
<proteinExistence type="evidence at protein level"/>
<accession>P85688</accession>